<dbReference type="EC" id="2.7.11.1"/>
<dbReference type="EMBL" id="AAFI02000005">
    <property type="protein sequence ID" value="EAL72198.1"/>
    <property type="molecule type" value="Genomic_DNA"/>
</dbReference>
<dbReference type="RefSeq" id="XP_646197.1">
    <property type="nucleotide sequence ID" value="XM_641105.1"/>
</dbReference>
<dbReference type="SMR" id="Q55DD4"/>
<dbReference type="FunCoup" id="Q55DD4">
    <property type="interactions" value="498"/>
</dbReference>
<dbReference type="STRING" id="44689.Q55DD4"/>
<dbReference type="GlyGen" id="Q55DD4">
    <property type="glycosylation" value="1 site"/>
</dbReference>
<dbReference type="PaxDb" id="44689-DDB0229968"/>
<dbReference type="EnsemblProtists" id="EAL72198">
    <property type="protein sequence ID" value="EAL72198"/>
    <property type="gene ID" value="DDB_G0269696"/>
</dbReference>
<dbReference type="GeneID" id="8617150"/>
<dbReference type="KEGG" id="ddi:DDB_G0269696"/>
<dbReference type="dictyBase" id="DDB_G0269696">
    <property type="gene designation" value="pakD"/>
</dbReference>
<dbReference type="VEuPathDB" id="AmoebaDB:DDB_G0269696"/>
<dbReference type="eggNOG" id="KOG0578">
    <property type="taxonomic scope" value="Eukaryota"/>
</dbReference>
<dbReference type="HOGENOM" id="CLU_241590_0_0_1"/>
<dbReference type="InParanoid" id="Q55DD4"/>
<dbReference type="OMA" id="GCKYKTH"/>
<dbReference type="Reactome" id="R-DDI-389359">
    <property type="pathway name" value="CD28 dependent Vav1 pathway"/>
</dbReference>
<dbReference type="Reactome" id="R-DDI-5627123">
    <property type="pathway name" value="RHO GTPases activate PAKs"/>
</dbReference>
<dbReference type="Reactome" id="R-DDI-5687128">
    <property type="pathway name" value="MAPK6/MAPK4 signaling"/>
</dbReference>
<dbReference type="Reactome" id="R-DDI-9013149">
    <property type="pathway name" value="RAC1 GTPase cycle"/>
</dbReference>
<dbReference type="Reactome" id="R-DDI-9013404">
    <property type="pathway name" value="RAC2 GTPase cycle"/>
</dbReference>
<dbReference type="Reactome" id="R-DDI-9013406">
    <property type="pathway name" value="RHOQ GTPase cycle"/>
</dbReference>
<dbReference type="Reactome" id="R-DDI-9013407">
    <property type="pathway name" value="RHOH GTPase cycle"/>
</dbReference>
<dbReference type="Reactome" id="R-DDI-9013408">
    <property type="pathway name" value="RHOG GTPase cycle"/>
</dbReference>
<dbReference type="Reactome" id="R-DDI-9013420">
    <property type="pathway name" value="RHOU GTPase cycle"/>
</dbReference>
<dbReference type="Reactome" id="R-DDI-9013423">
    <property type="pathway name" value="RAC3 GTPase cycle"/>
</dbReference>
<dbReference type="Reactome" id="R-DDI-9013424">
    <property type="pathway name" value="RHOV GTPase cycle"/>
</dbReference>
<dbReference type="PRO" id="PR:Q55DD4"/>
<dbReference type="Proteomes" id="UP000002195">
    <property type="component" value="Chromosome 1"/>
</dbReference>
<dbReference type="GO" id="GO:0031254">
    <property type="term" value="C:cell trailing edge"/>
    <property type="evidence" value="ECO:0000314"/>
    <property type="project" value="dictyBase"/>
</dbReference>
<dbReference type="GO" id="GO:0005737">
    <property type="term" value="C:cytoplasm"/>
    <property type="evidence" value="ECO:0000318"/>
    <property type="project" value="GO_Central"/>
</dbReference>
<dbReference type="GO" id="GO:0031143">
    <property type="term" value="C:pseudopodium"/>
    <property type="evidence" value="ECO:0000314"/>
    <property type="project" value="dictyBase"/>
</dbReference>
<dbReference type="GO" id="GO:0001931">
    <property type="term" value="C:uropod"/>
    <property type="evidence" value="ECO:0000314"/>
    <property type="project" value="dictyBase"/>
</dbReference>
<dbReference type="GO" id="GO:0005524">
    <property type="term" value="F:ATP binding"/>
    <property type="evidence" value="ECO:0007669"/>
    <property type="project" value="UniProtKB-KW"/>
</dbReference>
<dbReference type="GO" id="GO:0045499">
    <property type="term" value="F:chemorepellent activity"/>
    <property type="evidence" value="ECO:0000315"/>
    <property type="project" value="CACAO"/>
</dbReference>
<dbReference type="GO" id="GO:0106310">
    <property type="term" value="F:protein serine kinase activity"/>
    <property type="evidence" value="ECO:0007669"/>
    <property type="project" value="RHEA"/>
</dbReference>
<dbReference type="GO" id="GO:0004674">
    <property type="term" value="F:protein serine/threonine kinase activity"/>
    <property type="evidence" value="ECO:0000318"/>
    <property type="project" value="GO_Central"/>
</dbReference>
<dbReference type="GO" id="GO:0008270">
    <property type="term" value="F:zinc ion binding"/>
    <property type="evidence" value="ECO:0007669"/>
    <property type="project" value="UniProtKB-KW"/>
</dbReference>
<dbReference type="GO" id="GO:0030041">
    <property type="term" value="P:actin filament polymerization"/>
    <property type="evidence" value="ECO:0000315"/>
    <property type="project" value="dictyBase"/>
</dbReference>
<dbReference type="GO" id="GO:0031152">
    <property type="term" value="P:aggregation involved in sorocarp development"/>
    <property type="evidence" value="ECO:0000315"/>
    <property type="project" value="dictyBase"/>
</dbReference>
<dbReference type="GO" id="GO:0009267">
    <property type="term" value="P:cellular response to starvation"/>
    <property type="evidence" value="ECO:0000318"/>
    <property type="project" value="GO_Central"/>
</dbReference>
<dbReference type="GO" id="GO:0043327">
    <property type="term" value="P:chemotaxis to cAMP"/>
    <property type="evidence" value="ECO:0000315"/>
    <property type="project" value="dictyBase"/>
</dbReference>
<dbReference type="GO" id="GO:0140986">
    <property type="term" value="P:G protein-coupled chemorepellent receptor signaling pathway"/>
    <property type="evidence" value="ECO:0000315"/>
    <property type="project" value="dictyBase"/>
</dbReference>
<dbReference type="GO" id="GO:0035556">
    <property type="term" value="P:intracellular signal transduction"/>
    <property type="evidence" value="ECO:0000318"/>
    <property type="project" value="GO_Central"/>
</dbReference>
<dbReference type="GO" id="GO:1903665">
    <property type="term" value="P:negative regulation of asexual reproduction"/>
    <property type="evidence" value="ECO:0000315"/>
    <property type="project" value="dictyBase"/>
</dbReference>
<dbReference type="GO" id="GO:0051490">
    <property type="term" value="P:negative regulation of filopodium assembly"/>
    <property type="evidence" value="ECO:0000315"/>
    <property type="project" value="dictyBase"/>
</dbReference>
<dbReference type="GO" id="GO:0110094">
    <property type="term" value="P:polyphosphate-mediated signaling"/>
    <property type="evidence" value="ECO:0000315"/>
    <property type="project" value="dictyBase"/>
</dbReference>
<dbReference type="GO" id="GO:0043408">
    <property type="term" value="P:regulation of MAPK cascade"/>
    <property type="evidence" value="ECO:0000318"/>
    <property type="project" value="GO_Central"/>
</dbReference>
<dbReference type="CDD" id="cd00029">
    <property type="entry name" value="C1"/>
    <property type="match status" value="1"/>
</dbReference>
<dbReference type="CDD" id="cd00014">
    <property type="entry name" value="CH_SF"/>
    <property type="match status" value="1"/>
</dbReference>
<dbReference type="CDD" id="cd06614">
    <property type="entry name" value="STKc_PAK"/>
    <property type="match status" value="1"/>
</dbReference>
<dbReference type="FunFam" id="1.10.510.10:FF:000802">
    <property type="entry name" value="Serine/threonine protein kinase"/>
    <property type="match status" value="1"/>
</dbReference>
<dbReference type="Gene3D" id="3.30.60.20">
    <property type="match status" value="1"/>
</dbReference>
<dbReference type="Gene3D" id="1.10.418.10">
    <property type="entry name" value="Calponin-like domain"/>
    <property type="match status" value="1"/>
</dbReference>
<dbReference type="Gene3D" id="3.90.810.10">
    <property type="entry name" value="CRIB domain"/>
    <property type="match status" value="1"/>
</dbReference>
<dbReference type="Gene3D" id="1.10.510.10">
    <property type="entry name" value="Transferase(Phosphotransferase) domain 1"/>
    <property type="match status" value="1"/>
</dbReference>
<dbReference type="InterPro" id="IPR046349">
    <property type="entry name" value="C1-like_sf"/>
</dbReference>
<dbReference type="InterPro" id="IPR001715">
    <property type="entry name" value="CH_dom"/>
</dbReference>
<dbReference type="InterPro" id="IPR036872">
    <property type="entry name" value="CH_dom_sf"/>
</dbReference>
<dbReference type="InterPro" id="IPR000095">
    <property type="entry name" value="CRIB_dom"/>
</dbReference>
<dbReference type="InterPro" id="IPR036936">
    <property type="entry name" value="CRIB_dom_sf"/>
</dbReference>
<dbReference type="InterPro" id="IPR011009">
    <property type="entry name" value="Kinase-like_dom_sf"/>
</dbReference>
<dbReference type="InterPro" id="IPR002219">
    <property type="entry name" value="PE/DAG-bd"/>
</dbReference>
<dbReference type="InterPro" id="IPR000719">
    <property type="entry name" value="Prot_kinase_dom"/>
</dbReference>
<dbReference type="InterPro" id="IPR017441">
    <property type="entry name" value="Protein_kinase_ATP_BS"/>
</dbReference>
<dbReference type="InterPro" id="IPR050629">
    <property type="entry name" value="STE20/SPS1-PAK"/>
</dbReference>
<dbReference type="PANTHER" id="PTHR48012:SF10">
    <property type="entry name" value="FI20177P1"/>
    <property type="match status" value="1"/>
</dbReference>
<dbReference type="PANTHER" id="PTHR48012">
    <property type="entry name" value="STERILE20-LIKE KINASE, ISOFORM B-RELATED"/>
    <property type="match status" value="1"/>
</dbReference>
<dbReference type="Pfam" id="PF00130">
    <property type="entry name" value="C1_1"/>
    <property type="match status" value="1"/>
</dbReference>
<dbReference type="Pfam" id="PF00786">
    <property type="entry name" value="PBD"/>
    <property type="match status" value="1"/>
</dbReference>
<dbReference type="Pfam" id="PF00069">
    <property type="entry name" value="Pkinase"/>
    <property type="match status" value="1"/>
</dbReference>
<dbReference type="SMART" id="SM00109">
    <property type="entry name" value="C1"/>
    <property type="match status" value="1"/>
</dbReference>
<dbReference type="SMART" id="SM00220">
    <property type="entry name" value="S_TKc"/>
    <property type="match status" value="1"/>
</dbReference>
<dbReference type="SUPFAM" id="SSF81995">
    <property type="entry name" value="beta-sandwich domain of Sec23/24"/>
    <property type="match status" value="1"/>
</dbReference>
<dbReference type="SUPFAM" id="SSF47576">
    <property type="entry name" value="Calponin-homology domain, CH-domain"/>
    <property type="match status" value="1"/>
</dbReference>
<dbReference type="SUPFAM" id="SSF57889">
    <property type="entry name" value="Cysteine-rich domain"/>
    <property type="match status" value="1"/>
</dbReference>
<dbReference type="SUPFAM" id="SSF56112">
    <property type="entry name" value="Protein kinase-like (PK-like)"/>
    <property type="match status" value="1"/>
</dbReference>
<dbReference type="PROSITE" id="PS50021">
    <property type="entry name" value="CH"/>
    <property type="match status" value="1"/>
</dbReference>
<dbReference type="PROSITE" id="PS50108">
    <property type="entry name" value="CRIB"/>
    <property type="match status" value="1"/>
</dbReference>
<dbReference type="PROSITE" id="PS00107">
    <property type="entry name" value="PROTEIN_KINASE_ATP"/>
    <property type="match status" value="1"/>
</dbReference>
<dbReference type="PROSITE" id="PS50011">
    <property type="entry name" value="PROTEIN_KINASE_DOM"/>
    <property type="match status" value="1"/>
</dbReference>
<dbReference type="PROSITE" id="PS50081">
    <property type="entry name" value="ZF_DAG_PE_2"/>
    <property type="match status" value="1"/>
</dbReference>
<evidence type="ECO:0000250" key="1">
    <source>
        <dbReference type="UniProtKB" id="P28523"/>
    </source>
</evidence>
<evidence type="ECO:0000250" key="2">
    <source>
        <dbReference type="UniProtKB" id="Q869N2"/>
    </source>
</evidence>
<evidence type="ECO:0000255" key="3"/>
<evidence type="ECO:0000255" key="4">
    <source>
        <dbReference type="PROSITE-ProRule" id="PRU00044"/>
    </source>
</evidence>
<evidence type="ECO:0000255" key="5">
    <source>
        <dbReference type="PROSITE-ProRule" id="PRU00057"/>
    </source>
</evidence>
<evidence type="ECO:0000255" key="6">
    <source>
        <dbReference type="PROSITE-ProRule" id="PRU00159"/>
    </source>
</evidence>
<evidence type="ECO:0000255" key="7">
    <source>
        <dbReference type="PROSITE-ProRule" id="PRU00226"/>
    </source>
</evidence>
<evidence type="ECO:0000256" key="8">
    <source>
        <dbReference type="SAM" id="MobiDB-lite"/>
    </source>
</evidence>
<evidence type="ECO:0000312" key="9">
    <source>
        <dbReference type="EMBL" id="EAL72198.1"/>
    </source>
</evidence>
<feature type="chain" id="PRO_0000363949" description="Serine/threonine-protein kinase pakD">
    <location>
        <begin position="1"/>
        <end position="1678"/>
    </location>
</feature>
<feature type="domain" description="Calponin-homology (CH)" evidence="4">
    <location>
        <begin position="82"/>
        <end position="189"/>
    </location>
</feature>
<feature type="domain" description="CRIB" evidence="5">
    <location>
        <begin position="1202"/>
        <end position="1215"/>
    </location>
</feature>
<feature type="domain" description="Protein kinase" evidence="6">
    <location>
        <begin position="1376"/>
        <end position="1647"/>
    </location>
</feature>
<feature type="zinc finger region" description="Phorbol-ester/DAG-type" evidence="7">
    <location>
        <begin position="1141"/>
        <end position="1197"/>
    </location>
</feature>
<feature type="region of interest" description="Disordered" evidence="8">
    <location>
        <begin position="1"/>
        <end position="73"/>
    </location>
</feature>
<feature type="region of interest" description="Disordered" evidence="8">
    <location>
        <begin position="180"/>
        <end position="224"/>
    </location>
</feature>
<feature type="region of interest" description="Disordered" evidence="8">
    <location>
        <begin position="262"/>
        <end position="428"/>
    </location>
</feature>
<feature type="region of interest" description="Disordered" evidence="8">
    <location>
        <begin position="442"/>
        <end position="489"/>
    </location>
</feature>
<feature type="region of interest" description="Disordered" evidence="8">
    <location>
        <begin position="631"/>
        <end position="672"/>
    </location>
</feature>
<feature type="region of interest" description="Disordered" evidence="8">
    <location>
        <begin position="693"/>
        <end position="722"/>
    </location>
</feature>
<feature type="region of interest" description="Disordered" evidence="8">
    <location>
        <begin position="1267"/>
        <end position="1292"/>
    </location>
</feature>
<feature type="region of interest" description="Disordered" evidence="8">
    <location>
        <begin position="1323"/>
        <end position="1346"/>
    </location>
</feature>
<feature type="coiled-coil region" evidence="3">
    <location>
        <begin position="512"/>
        <end position="542"/>
    </location>
</feature>
<feature type="coiled-coil region" evidence="3">
    <location>
        <begin position="570"/>
        <end position="628"/>
    </location>
</feature>
<feature type="coiled-coil region" evidence="3">
    <location>
        <begin position="752"/>
        <end position="862"/>
    </location>
</feature>
<feature type="coiled-coil region" evidence="3">
    <location>
        <begin position="1269"/>
        <end position="1309"/>
    </location>
</feature>
<feature type="compositionally biased region" description="Low complexity" evidence="8">
    <location>
        <begin position="1"/>
        <end position="15"/>
    </location>
</feature>
<feature type="compositionally biased region" description="Polar residues" evidence="8">
    <location>
        <begin position="17"/>
        <end position="34"/>
    </location>
</feature>
<feature type="compositionally biased region" description="Low complexity" evidence="8">
    <location>
        <begin position="35"/>
        <end position="73"/>
    </location>
</feature>
<feature type="compositionally biased region" description="Low complexity" evidence="8">
    <location>
        <begin position="180"/>
        <end position="214"/>
    </location>
</feature>
<feature type="compositionally biased region" description="Polar residues" evidence="8">
    <location>
        <begin position="215"/>
        <end position="224"/>
    </location>
</feature>
<feature type="compositionally biased region" description="Low complexity" evidence="8">
    <location>
        <begin position="276"/>
        <end position="359"/>
    </location>
</feature>
<feature type="compositionally biased region" description="Low complexity" evidence="8">
    <location>
        <begin position="399"/>
        <end position="428"/>
    </location>
</feature>
<feature type="compositionally biased region" description="Acidic residues" evidence="8">
    <location>
        <begin position="460"/>
        <end position="472"/>
    </location>
</feature>
<feature type="compositionally biased region" description="Low complexity" evidence="8">
    <location>
        <begin position="631"/>
        <end position="654"/>
    </location>
</feature>
<feature type="compositionally biased region" description="Low complexity" evidence="8">
    <location>
        <begin position="662"/>
        <end position="671"/>
    </location>
</feature>
<feature type="compositionally biased region" description="Low complexity" evidence="8">
    <location>
        <begin position="695"/>
        <end position="713"/>
    </location>
</feature>
<feature type="active site" description="Proton acceptor" evidence="1 6">
    <location>
        <position position="1515"/>
    </location>
</feature>
<feature type="binding site" evidence="1 6">
    <location>
        <begin position="1382"/>
        <end position="1390"/>
    </location>
    <ligand>
        <name>ATP</name>
        <dbReference type="ChEBI" id="CHEBI:30616"/>
    </ligand>
</feature>
<feature type="binding site" evidence="1 6">
    <location>
        <position position="1405"/>
    </location>
    <ligand>
        <name>ATP</name>
        <dbReference type="ChEBI" id="CHEBI:30616"/>
    </ligand>
</feature>
<comment type="catalytic activity">
    <reaction evidence="2">
        <text>L-seryl-[protein] + ATP = O-phospho-L-seryl-[protein] + ADP + H(+)</text>
        <dbReference type="Rhea" id="RHEA:17989"/>
        <dbReference type="Rhea" id="RHEA-COMP:9863"/>
        <dbReference type="Rhea" id="RHEA-COMP:11604"/>
        <dbReference type="ChEBI" id="CHEBI:15378"/>
        <dbReference type="ChEBI" id="CHEBI:29999"/>
        <dbReference type="ChEBI" id="CHEBI:30616"/>
        <dbReference type="ChEBI" id="CHEBI:83421"/>
        <dbReference type="ChEBI" id="CHEBI:456216"/>
        <dbReference type="EC" id="2.7.11.1"/>
    </reaction>
</comment>
<comment type="catalytic activity">
    <reaction evidence="2">
        <text>L-threonyl-[protein] + ATP = O-phospho-L-threonyl-[protein] + ADP + H(+)</text>
        <dbReference type="Rhea" id="RHEA:46608"/>
        <dbReference type="Rhea" id="RHEA-COMP:11060"/>
        <dbReference type="Rhea" id="RHEA-COMP:11605"/>
        <dbReference type="ChEBI" id="CHEBI:15378"/>
        <dbReference type="ChEBI" id="CHEBI:30013"/>
        <dbReference type="ChEBI" id="CHEBI:30616"/>
        <dbReference type="ChEBI" id="CHEBI:61977"/>
        <dbReference type="ChEBI" id="CHEBI:456216"/>
        <dbReference type="EC" id="2.7.11.1"/>
    </reaction>
</comment>
<comment type="cofactor">
    <cofactor evidence="2">
        <name>Mg(2+)</name>
        <dbReference type="ChEBI" id="CHEBI:18420"/>
    </cofactor>
</comment>
<comment type="similarity">
    <text evidence="2">Belongs to the protein kinase superfamily. STE Ser/Thr protein kinase family. STE20 subfamily.</text>
</comment>
<gene>
    <name evidence="9" type="primary">pakD</name>
    <name type="ORF">DDB_G0269696</name>
</gene>
<reference evidence="9" key="1">
    <citation type="journal article" date="2005" name="Nature">
        <title>The genome of the social amoeba Dictyostelium discoideum.</title>
        <authorList>
            <person name="Eichinger L."/>
            <person name="Pachebat J.A."/>
            <person name="Gloeckner G."/>
            <person name="Rajandream M.A."/>
            <person name="Sucgang R."/>
            <person name="Berriman M."/>
            <person name="Song J."/>
            <person name="Olsen R."/>
            <person name="Szafranski K."/>
            <person name="Xu Q."/>
            <person name="Tunggal B."/>
            <person name="Kummerfeld S."/>
            <person name="Madera M."/>
            <person name="Konfortov B.A."/>
            <person name="Rivero F."/>
            <person name="Bankier A.T."/>
            <person name="Lehmann R."/>
            <person name="Hamlin N."/>
            <person name="Davies R."/>
            <person name="Gaudet P."/>
            <person name="Fey P."/>
            <person name="Pilcher K."/>
            <person name="Chen G."/>
            <person name="Saunders D."/>
            <person name="Sodergren E.J."/>
            <person name="Davis P."/>
            <person name="Kerhornou A."/>
            <person name="Nie X."/>
            <person name="Hall N."/>
            <person name="Anjard C."/>
            <person name="Hemphill L."/>
            <person name="Bason N."/>
            <person name="Farbrother P."/>
            <person name="Desany B."/>
            <person name="Just E."/>
            <person name="Morio T."/>
            <person name="Rost R."/>
            <person name="Churcher C.M."/>
            <person name="Cooper J."/>
            <person name="Haydock S."/>
            <person name="van Driessche N."/>
            <person name="Cronin A."/>
            <person name="Goodhead I."/>
            <person name="Muzny D.M."/>
            <person name="Mourier T."/>
            <person name="Pain A."/>
            <person name="Lu M."/>
            <person name="Harper D."/>
            <person name="Lindsay R."/>
            <person name="Hauser H."/>
            <person name="James K.D."/>
            <person name="Quiles M."/>
            <person name="Madan Babu M."/>
            <person name="Saito T."/>
            <person name="Buchrieser C."/>
            <person name="Wardroper A."/>
            <person name="Felder M."/>
            <person name="Thangavelu M."/>
            <person name="Johnson D."/>
            <person name="Knights A."/>
            <person name="Loulseged H."/>
            <person name="Mungall K.L."/>
            <person name="Oliver K."/>
            <person name="Price C."/>
            <person name="Quail M.A."/>
            <person name="Urushihara H."/>
            <person name="Hernandez J."/>
            <person name="Rabbinowitsch E."/>
            <person name="Steffen D."/>
            <person name="Sanders M."/>
            <person name="Ma J."/>
            <person name="Kohara Y."/>
            <person name="Sharp S."/>
            <person name="Simmonds M.N."/>
            <person name="Spiegler S."/>
            <person name="Tivey A."/>
            <person name="Sugano S."/>
            <person name="White B."/>
            <person name="Walker D."/>
            <person name="Woodward J.R."/>
            <person name="Winckler T."/>
            <person name="Tanaka Y."/>
            <person name="Shaulsky G."/>
            <person name="Schleicher M."/>
            <person name="Weinstock G.M."/>
            <person name="Rosenthal A."/>
            <person name="Cox E.C."/>
            <person name="Chisholm R.L."/>
            <person name="Gibbs R.A."/>
            <person name="Loomis W.F."/>
            <person name="Platzer M."/>
            <person name="Kay R.R."/>
            <person name="Williams J.G."/>
            <person name="Dear P.H."/>
            <person name="Noegel A.A."/>
            <person name="Barrell B.G."/>
            <person name="Kuspa A."/>
        </authorList>
    </citation>
    <scope>NUCLEOTIDE SEQUENCE [LARGE SCALE GENOMIC DNA]</scope>
    <source>
        <strain evidence="9">AX4</strain>
    </source>
</reference>
<organism>
    <name type="scientific">Dictyostelium discoideum</name>
    <name type="common">Social amoeba</name>
    <dbReference type="NCBI Taxonomy" id="44689"/>
    <lineage>
        <taxon>Eukaryota</taxon>
        <taxon>Amoebozoa</taxon>
        <taxon>Evosea</taxon>
        <taxon>Eumycetozoa</taxon>
        <taxon>Dictyostelia</taxon>
        <taxon>Dictyosteliales</taxon>
        <taxon>Dictyosteliaceae</taxon>
        <taxon>Dictyostelium</taxon>
    </lineage>
</organism>
<sequence>MSRLQPQQQQRGRSSSFKDNFQIQKPLQSLTPSEQQQQQQQQQQQQQQQQQQQQQQQQQNNANNNNNNNNNKFNNQYIQQMKNVENDIKKWIGEKCSSSLSDDFLEKDLMESLCTGTILCVLINMIKQGTIQKIHLQPNYLQRVENIRNYLRACWLFGLHSKYFFPSSYLLSMTIENNDNSNSSKTTTNNNNNNNNNNNNNNNNNNNNNNNNNNRAIITSPNKNGGVNTMIVNLEYKEKIMINLTELCKISLKIKNFGSFLQLSSSSSSTPPPPINNNNNNNNNNNNNNNNNNDLLISNNSSNISSPNSFSDSPMGFSSSINSSSNNSNLNTPNNYNNTNNNNNNNNNNNNNNNNNINNLTPQMIISSPTSTSSTPPLPPCANNINNNNLKKRTKIPKNNNNNNNNNNNNNNNNNNNNNNNNNNNNNNKIIIKRDCKKVYRKRKSSNCDNDDNGSNSDSDSSDSSDSSDSDSDSLLSSDGTPIILSQSSNPESVSFKSFIKEILHLKNIISKQDKTITSQKQTIETLEKDLEFQKQLTKKLLSSPIDLSNFIETSSDPNGAIPVSIQAFTRQIQQIQTLQQQNLSLETELSKTNEHLSTNIRKNSKLENEVLSIETELLNLRMKYANTLSSSNSNGNNNSNNNSLGCNNSINGSSSGGGGNNSSTSKGTLSRTISQPFPLRKSISHSNIITSPVNSHQQQQQQNQLSQSQTTSPKNTSASYNNGILSKSSIVSNTNTNSTYKFGSSTGILKVSATLQQKQQQQQQQQNQQQQQNQQQQQQNQQQQNQQQQNQQKQNQQQQNQQQQQQQQQQQQQNQQQQQQQQQQQQQQQQQQNQQQQQNNQLSQSQQLQQQQNQQINNLIDSPLIISNSSNQQIESESIESDSDYDKDMVDFGKKIVSALISSSNHVEMSEIYKMNDILTNETSRRQICIVLEEETKINQLKLPMNENSFEVTLYLVNTILQCIHEAPSKDYFSLKLIMESSRILNRKKVNGSCEFIQEFIKDHPTWKDIKFWEEQYWDELIIKHQQFSGSGSSSSSNTGGSIVTTMTTTTTVTSAITSSSSTTSDDFDVDYTELVNTLLISYVYNLASWGLSKSDVKEFTISMSKKSFLKSNELEKLIEQVTSTVELSFTSDHNVCKGPHSFVLKSFRIISECNYCRQYIWGVRGIVAREAFECVGCKYKTHKKCLKEASEKTFCSSPNVGAPFNVKHEMHVGLAIQGLPSGWRTLLLQSGFQDYEIQQHQEDVLDVLEFHHVYNEKQQNSIKLLTNNSNNNNNNNNSNNNLQQQQQQNQQLKQKLNITNNQQNNTIININITSPSISVNNNTYNNNNNNNNNNEINPSSPNNNNNYYDSLLEIEEPSFTLKDLVSLENPIDLYKVREVVGGGSTGKVYVGENSITGEKVAIKKMKVDNNNIKNIINEISTMKNSKHKNVIKYVSSHLVINHIWLIMEYMSYGSLTDLISNCINIQCNGNNQQQQQQQQQQQTYFIESHIAYICQQVLQGMDYIHKGHRTHRDIKSDNILLGKDGSVKIADFGFVANLTRKKLQRNSVVGTPYFMAPELIRGNQYNHKVDIWSLGILARELSEGEPPYAKYPPVRALFLLTLEGVPDFKEPNKWSSDFIEFVNLCLNLDDKRRPDAHYLLRHPFLKKACSSREFADKVEEIYNTRKNQFSDINFNF</sequence>
<accession>Q55DD4</accession>
<name>PAKD_DICDI</name>
<protein>
    <recommendedName>
        <fullName evidence="2">Serine/threonine-protein kinase pakD</fullName>
        <ecNumber>2.7.11.1</ecNumber>
    </recommendedName>
</protein>
<proteinExistence type="inferred from homology"/>
<keyword id="KW-0067">ATP-binding</keyword>
<keyword id="KW-0175">Coiled coil</keyword>
<keyword id="KW-0418">Kinase</keyword>
<keyword id="KW-0460">Magnesium</keyword>
<keyword id="KW-0479">Metal-binding</keyword>
<keyword id="KW-0547">Nucleotide-binding</keyword>
<keyword id="KW-1185">Reference proteome</keyword>
<keyword id="KW-0723">Serine/threonine-protein kinase</keyword>
<keyword id="KW-0808">Transferase</keyword>
<keyword id="KW-0862">Zinc</keyword>
<keyword id="KW-0863">Zinc-finger</keyword>